<name>RL13_ALKOO</name>
<dbReference type="EMBL" id="CP000853">
    <property type="protein sequence ID" value="ABW18089.1"/>
    <property type="molecule type" value="Genomic_DNA"/>
</dbReference>
<dbReference type="RefSeq" id="WP_012158403.1">
    <property type="nucleotide sequence ID" value="NC_009922.1"/>
</dbReference>
<dbReference type="SMR" id="A8MLH5"/>
<dbReference type="STRING" id="350688.Clos_0527"/>
<dbReference type="KEGG" id="aoe:Clos_0527"/>
<dbReference type="eggNOG" id="COG0102">
    <property type="taxonomic scope" value="Bacteria"/>
</dbReference>
<dbReference type="HOGENOM" id="CLU_082184_2_2_9"/>
<dbReference type="OrthoDB" id="9801330at2"/>
<dbReference type="Proteomes" id="UP000000269">
    <property type="component" value="Chromosome"/>
</dbReference>
<dbReference type="GO" id="GO:0022625">
    <property type="term" value="C:cytosolic large ribosomal subunit"/>
    <property type="evidence" value="ECO:0007669"/>
    <property type="project" value="TreeGrafter"/>
</dbReference>
<dbReference type="GO" id="GO:0003729">
    <property type="term" value="F:mRNA binding"/>
    <property type="evidence" value="ECO:0007669"/>
    <property type="project" value="TreeGrafter"/>
</dbReference>
<dbReference type="GO" id="GO:0003735">
    <property type="term" value="F:structural constituent of ribosome"/>
    <property type="evidence" value="ECO:0007669"/>
    <property type="project" value="InterPro"/>
</dbReference>
<dbReference type="GO" id="GO:0017148">
    <property type="term" value="P:negative regulation of translation"/>
    <property type="evidence" value="ECO:0007669"/>
    <property type="project" value="TreeGrafter"/>
</dbReference>
<dbReference type="GO" id="GO:0006412">
    <property type="term" value="P:translation"/>
    <property type="evidence" value="ECO:0007669"/>
    <property type="project" value="UniProtKB-UniRule"/>
</dbReference>
<dbReference type="CDD" id="cd00392">
    <property type="entry name" value="Ribosomal_L13"/>
    <property type="match status" value="1"/>
</dbReference>
<dbReference type="FunFam" id="3.90.1180.10:FF:000001">
    <property type="entry name" value="50S ribosomal protein L13"/>
    <property type="match status" value="1"/>
</dbReference>
<dbReference type="Gene3D" id="3.90.1180.10">
    <property type="entry name" value="Ribosomal protein L13"/>
    <property type="match status" value="1"/>
</dbReference>
<dbReference type="HAMAP" id="MF_01366">
    <property type="entry name" value="Ribosomal_uL13"/>
    <property type="match status" value="1"/>
</dbReference>
<dbReference type="InterPro" id="IPR005822">
    <property type="entry name" value="Ribosomal_uL13"/>
</dbReference>
<dbReference type="InterPro" id="IPR005823">
    <property type="entry name" value="Ribosomal_uL13_bac-type"/>
</dbReference>
<dbReference type="InterPro" id="IPR023563">
    <property type="entry name" value="Ribosomal_uL13_CS"/>
</dbReference>
<dbReference type="InterPro" id="IPR036899">
    <property type="entry name" value="Ribosomal_uL13_sf"/>
</dbReference>
<dbReference type="NCBIfam" id="TIGR01066">
    <property type="entry name" value="rplM_bact"/>
    <property type="match status" value="1"/>
</dbReference>
<dbReference type="PANTHER" id="PTHR11545:SF2">
    <property type="entry name" value="LARGE RIBOSOMAL SUBUNIT PROTEIN UL13M"/>
    <property type="match status" value="1"/>
</dbReference>
<dbReference type="PANTHER" id="PTHR11545">
    <property type="entry name" value="RIBOSOMAL PROTEIN L13"/>
    <property type="match status" value="1"/>
</dbReference>
<dbReference type="Pfam" id="PF00572">
    <property type="entry name" value="Ribosomal_L13"/>
    <property type="match status" value="1"/>
</dbReference>
<dbReference type="PIRSF" id="PIRSF002181">
    <property type="entry name" value="Ribosomal_L13"/>
    <property type="match status" value="1"/>
</dbReference>
<dbReference type="SUPFAM" id="SSF52161">
    <property type="entry name" value="Ribosomal protein L13"/>
    <property type="match status" value="1"/>
</dbReference>
<dbReference type="PROSITE" id="PS00783">
    <property type="entry name" value="RIBOSOMAL_L13"/>
    <property type="match status" value="1"/>
</dbReference>
<sequence>MKSYMAKPNEVERKWYVVDAEGKTLGRLSSEIATILRGKNKPEFTPHVDTGDFVIVVNAEKVALTGKKLDQSFYTYHTGHPGGLRQVSFRRLLAEKPESLVYNAVKGMLPKTRLGRQMLTKLKVYAGPNHKHEAQQPEALELL</sequence>
<gene>
    <name evidence="1" type="primary">rplM</name>
    <name type="ordered locus">Clos_0527</name>
</gene>
<protein>
    <recommendedName>
        <fullName evidence="1">Large ribosomal subunit protein uL13</fullName>
    </recommendedName>
    <alternativeName>
        <fullName evidence="2">50S ribosomal protein L13</fullName>
    </alternativeName>
</protein>
<evidence type="ECO:0000255" key="1">
    <source>
        <dbReference type="HAMAP-Rule" id="MF_01366"/>
    </source>
</evidence>
<evidence type="ECO:0000305" key="2"/>
<keyword id="KW-1185">Reference proteome</keyword>
<keyword id="KW-0687">Ribonucleoprotein</keyword>
<keyword id="KW-0689">Ribosomal protein</keyword>
<reference key="1">
    <citation type="submission" date="2007-10" db="EMBL/GenBank/DDBJ databases">
        <title>Complete genome of Alkaliphilus oremlandii OhILAs.</title>
        <authorList>
            <person name="Copeland A."/>
            <person name="Lucas S."/>
            <person name="Lapidus A."/>
            <person name="Barry K."/>
            <person name="Detter J.C."/>
            <person name="Glavina del Rio T."/>
            <person name="Hammon N."/>
            <person name="Israni S."/>
            <person name="Dalin E."/>
            <person name="Tice H."/>
            <person name="Pitluck S."/>
            <person name="Chain P."/>
            <person name="Malfatti S."/>
            <person name="Shin M."/>
            <person name="Vergez L."/>
            <person name="Schmutz J."/>
            <person name="Larimer F."/>
            <person name="Land M."/>
            <person name="Hauser L."/>
            <person name="Kyrpides N."/>
            <person name="Mikhailova N."/>
            <person name="Stolz J.F."/>
            <person name="Dawson A."/>
            <person name="Fisher E."/>
            <person name="Crable B."/>
            <person name="Perera E."/>
            <person name="Lisak J."/>
            <person name="Ranganathan M."/>
            <person name="Basu P."/>
            <person name="Richardson P."/>
        </authorList>
    </citation>
    <scope>NUCLEOTIDE SEQUENCE [LARGE SCALE GENOMIC DNA]</scope>
    <source>
        <strain>OhILAs</strain>
    </source>
</reference>
<comment type="function">
    <text evidence="1">This protein is one of the early assembly proteins of the 50S ribosomal subunit, although it is not seen to bind rRNA by itself. It is important during the early stages of 50S assembly.</text>
</comment>
<comment type="subunit">
    <text evidence="1">Part of the 50S ribosomal subunit.</text>
</comment>
<comment type="similarity">
    <text evidence="1">Belongs to the universal ribosomal protein uL13 family.</text>
</comment>
<organism>
    <name type="scientific">Alkaliphilus oremlandii (strain OhILAs)</name>
    <name type="common">Clostridium oremlandii (strain OhILAs)</name>
    <dbReference type="NCBI Taxonomy" id="350688"/>
    <lineage>
        <taxon>Bacteria</taxon>
        <taxon>Bacillati</taxon>
        <taxon>Bacillota</taxon>
        <taxon>Clostridia</taxon>
        <taxon>Peptostreptococcales</taxon>
        <taxon>Natronincolaceae</taxon>
        <taxon>Alkaliphilus</taxon>
    </lineage>
</organism>
<proteinExistence type="inferred from homology"/>
<accession>A8MLH5</accession>
<feature type="chain" id="PRO_1000067987" description="Large ribosomal subunit protein uL13">
    <location>
        <begin position="1"/>
        <end position="143"/>
    </location>
</feature>